<evidence type="ECO:0000250" key="1">
    <source>
        <dbReference type="UniProtKB" id="Q8KNP3"/>
    </source>
</evidence>
<evidence type="ECO:0000269" key="2">
    <source>
    </source>
</evidence>
<evidence type="ECO:0000269" key="3">
    <source>
    </source>
</evidence>
<evidence type="ECO:0000269" key="4">
    <source>
    </source>
</evidence>
<evidence type="ECO:0000269" key="5">
    <source>
    </source>
</evidence>
<evidence type="ECO:0000269" key="6">
    <source>
    </source>
</evidence>
<evidence type="ECO:0000269" key="7">
    <source>
    </source>
</evidence>
<evidence type="ECO:0000303" key="8">
    <source>
    </source>
</evidence>
<evidence type="ECO:0000305" key="9"/>
<evidence type="ECO:0000305" key="10">
    <source>
    </source>
</evidence>
<evidence type="ECO:0000312" key="11">
    <source>
        <dbReference type="EMBL" id="ABY62892.1"/>
    </source>
</evidence>
<evidence type="ECO:0007744" key="12">
    <source>
        <dbReference type="PDB" id="3J5V"/>
    </source>
</evidence>
<evidence type="ECO:0007744" key="13">
    <source>
        <dbReference type="PDB" id="3R4V"/>
    </source>
</evidence>
<evidence type="ECO:0007744" key="14">
    <source>
        <dbReference type="PDB" id="3RB8"/>
    </source>
</evidence>
<evidence type="ECO:0007829" key="15">
    <source>
        <dbReference type="PDB" id="3R4V"/>
    </source>
</evidence>
<evidence type="ECO:0007829" key="16">
    <source>
        <dbReference type="PDB" id="3RB8"/>
    </source>
</evidence>
<proteinExistence type="evidence at protein level"/>
<comment type="function">
    <text evidence="2 3 4 5 6 7 10">A tubulin-like GTPase that forms filaments, which are required for positioning viral DNA and capsids in the middle of the host cell for optimal replication (PubMed:22726436, PubMed:25429514, PubMed:28082593, PubMed:28813669, PubMed:31199917). The motor component of a partition system which pushes phage DNA (encased by protein gp105) to the center of the bacterial host cell (PubMed:28082593, PubMed:28813669). Also required for movement of phage capsids to the vicinity of the viral DNA and rotation of the encased viral DNA at midcell (PubMed:31199917). Forms filaments during the lytic phase, which position phage DNA at the center of the bacterial host cell (PubMed:22726436, PubMed:25429514, PubMed:28082593, PubMed:28813669, PubMed:31199917). Filaments have a three-stranded intertwined achitecture and form a spindle-like cytoskeleton within the infected cell (PubMed:24631461). Has GTPase activity (PubMed:22726436). Filaments grow at the plus end and depolymerize at the minus end, a process called treadmilling, and switch from growing in a polar manner to catastrophic depolymerization, i.e. they display dynamic instability, like tubulin. In infected host cells the filament ends close to the cell pole are relatively stable, while the other end near the phage DNA is highly dynamic (PubMed:25429514). Both capsid movement and DNA rotation probably require treadmilling (Probable).</text>
</comment>
<comment type="catalytic activity">
    <reaction evidence="2">
        <text>GTP + H2O = GDP + phosphate + H(+)</text>
        <dbReference type="Rhea" id="RHEA:19669"/>
        <dbReference type="ChEBI" id="CHEBI:15377"/>
        <dbReference type="ChEBI" id="CHEBI:15378"/>
        <dbReference type="ChEBI" id="CHEBI:37565"/>
        <dbReference type="ChEBI" id="CHEBI:43474"/>
        <dbReference type="ChEBI" id="CHEBI:58189"/>
    </reaction>
</comment>
<comment type="activity regulation">
    <text evidence="4">The non-hydrolyzable GTP analog GMPCPP stabilizes filaments, which never disassemble.</text>
</comment>
<comment type="subunit">
    <text evidence="2 4">Homomultimer (PubMed:22726436, PubMed:25429514). Polymerizes in a strictly GTP-dependent manner (PubMed:22726436, PubMed:25429514).</text>
</comment>
<comment type="interaction">
    <interactant intactId="EBI-16096260">
        <id>B3FK34</id>
    </interactant>
    <interactant intactId="EBI-16096260">
        <id>B3FK34</id>
        <label>201phi2-1p059</label>
    </interactant>
    <organismsDiffer>false</organismsDiffer>
    <experiments>4</experiments>
</comment>
<comment type="subcellular location">
    <subcellularLocation>
        <location evidence="2 4">Host cytoplasm</location>
    </subcellularLocation>
    <text evidence="3 4 6">In infected host cells forms a spindle-like structure emanating from each cell pole.</text>
</comment>
<comment type="induction">
    <text evidence="2 6">Expressed by 1 hour post-infection (at protein level).</text>
</comment>
<comment type="domain">
    <text evidence="2">Consists of two domains: a nucleotide-binding N-terminus that hydrolyzes GTP and a C-terminus domain necessary for polymerization (PubMed:22726436). The domains are bridged by a long, central helix (PubMed:22726436). Interactions between the C-terminus and the following monomer drive polymerization (PubMed:22726436).</text>
</comment>
<comment type="similarity">
    <text evidence="9">Belongs to the FtsZ family. PhuZ subfamily.</text>
</comment>
<reference key="1">
    <citation type="journal article" date="2008" name="Virology">
        <title>Characterization of Pseudomonas chlororaphis myovirus 201varphi2-1 via genomic sequencing, mass spectrometry, and electron microscopy.</title>
        <authorList>
            <person name="Thomas J.A."/>
            <person name="Rolando M.R."/>
            <person name="Carroll C.A."/>
            <person name="Shen P.S."/>
            <person name="Belnap D.M."/>
            <person name="Weintraub S.T."/>
            <person name="Serwer P."/>
            <person name="Hardies S.C."/>
        </authorList>
    </citation>
    <scope>NUCLEOTIDE SEQUENCE [GENOMIC DNA]</scope>
</reference>
<reference key="2">
    <citation type="journal article" date="2014" name="Elife">
        <title>A bacteriophage tubulin harnesses dynamic instability to center DNA in infected cells.</title>
        <authorList>
            <person name="Erb M.L."/>
            <person name="Kraemer J.A."/>
            <person name="Coker J.K."/>
            <person name="Chaikeeratisak V."/>
            <person name="Nonejuie P."/>
            <person name="Agard D.A."/>
            <person name="Pogliano J."/>
        </authorList>
    </citation>
    <scope>FUNCTION</scope>
    <scope>ACTIVITY REGULATION</scope>
    <scope>SUBUNIT</scope>
    <scope>SUBCELLULAR LOCATION</scope>
    <scope>MUTAGENESIS OF ASP-190</scope>
</reference>
<reference key="3">
    <citation type="journal article" date="2017" name="Science">
        <title>Assembly of a nucleus-like structure during viral replication in bacteria.</title>
        <authorList>
            <person name="Chaikeeratisak V."/>
            <person name="Nguyen K."/>
            <person name="Khanna K."/>
            <person name="Brilot A.F."/>
            <person name="Erb M.L."/>
            <person name="Coker J.K."/>
            <person name="Vavilina A."/>
            <person name="Newton G.L."/>
            <person name="Buschauer R."/>
            <person name="Pogliano K."/>
            <person name="Villa E."/>
            <person name="Agard D.A."/>
            <person name="Pogliano J."/>
        </authorList>
    </citation>
    <scope>FUNCTION IN BACTERIOPHAGE DNA POSITIONING</scope>
    <scope>MUTAGENESIS OF ASP-190</scope>
</reference>
<reference key="4">
    <citation type="journal article" date="2017" name="Cell Rep.">
        <title>The Phage Nucleus and Tubulin Spindle Are Conserved among Large Pseudomonas Phages.</title>
        <authorList>
            <person name="Chaikeeratisak V."/>
            <person name="Nguyen K."/>
            <person name="Egan M.E."/>
            <person name="Erb M.L."/>
            <person name="Vavilina A."/>
            <person name="Pogliano J."/>
        </authorList>
    </citation>
    <scope>FUNCTION</scope>
    <scope>SUBCELLULAR LOCATION</scope>
    <scope>INDUCTION</scope>
</reference>
<reference key="5">
    <citation type="journal article" date="2019" name="Cell">
        <title>Viral Capsid Trafficking along Treadmilling Tubulin Filaments in Bacteria.</title>
        <authorList>
            <person name="Chaikeeratisak V."/>
            <person name="Khanna K."/>
            <person name="Nguyen K.T."/>
            <person name="Sugie J."/>
            <person name="Egan M.E."/>
            <person name="Erb M.L."/>
            <person name="Vavilina A."/>
            <person name="Nonejuie P."/>
            <person name="Nieweglowska E."/>
            <person name="Pogliano K."/>
            <person name="Agard D.A."/>
            <person name="Villa E."/>
            <person name="Pogliano J."/>
        </authorList>
    </citation>
    <scope>FUNCTION IN BACTERIOPHAGE CAPSID MOVEMENT</scope>
    <scope>MUTAGENESIS OF ASP-190; ASP-235; ASP-259 AND ASP-263</scope>
</reference>
<reference evidence="13 14" key="6">
    <citation type="journal article" date="2012" name="Cell">
        <title>A phage tubulin assembles dynamic filaments by an atypical mechanism to center viral DNA within the host cell.</title>
        <authorList>
            <person name="Kraemer J.A."/>
            <person name="Erb M.L."/>
            <person name="Waddling C.A."/>
            <person name="Montabana E.A."/>
            <person name="Zehr E.A."/>
            <person name="Wang H."/>
            <person name="Nguyen K."/>
            <person name="Pham D.S."/>
            <person name="Agard D.A."/>
            <person name="Pogliano J."/>
        </authorList>
    </citation>
    <scope>X-RAY CRYSTALLOGRAPHY (1.67 ANGSTROMS)</scope>
    <scope>FUNCTION</scope>
    <scope>CATALYTIC ACTIVITY</scope>
    <scope>INDUCTION</scope>
    <scope>DOMAIN</scope>
    <scope>MUTAGENESIS OF ASP-187 AND ASP-190</scope>
    <scope>SUBCELLULAR LOCATION</scope>
    <scope>SUBUNIT</scope>
</reference>
<reference evidence="12" key="7">
    <citation type="journal article" date="2014" name="Structure">
        <title>The structure and assembly mechanism of a novel three-stranded tubulin filament that centers phage DNA.</title>
        <authorList>
            <person name="Zehr E.A."/>
            <person name="Kraemer J.A."/>
            <person name="Erb M.L."/>
            <person name="Coker J.K."/>
            <person name="Montabana E.A."/>
            <person name="Pogliano J."/>
            <person name="Agard D.A."/>
        </authorList>
    </citation>
    <scope>STRUCTURE BY ELECTRON MICROSCOPY (7.10 ANGSTROMS) OF 2-315</scope>
    <scope>FUNCTION</scope>
    <scope>MUTAGENESIS OF ARG-217; ASP-303 AND ASP-305</scope>
</reference>
<name>PHUZ_BP201</name>
<dbReference type="EC" id="3.6.5.-" evidence="2"/>
<dbReference type="EMBL" id="EU197055">
    <property type="protein sequence ID" value="ABY62892.1"/>
    <property type="molecule type" value="Genomic_DNA"/>
</dbReference>
<dbReference type="RefSeq" id="YP_001956784.1">
    <property type="nucleotide sequence ID" value="NC_010821.1"/>
</dbReference>
<dbReference type="PDB" id="3J5V">
    <property type="method" value="EM"/>
    <property type="resolution" value="7.10 A"/>
    <property type="chains" value="a=2-315"/>
</dbReference>
<dbReference type="PDB" id="3R4V">
    <property type="method" value="X-ray"/>
    <property type="resolution" value="1.67 A"/>
    <property type="chains" value="A=1-315"/>
</dbReference>
<dbReference type="PDB" id="3RB8">
    <property type="method" value="X-ray"/>
    <property type="resolution" value="2.60 A"/>
    <property type="chains" value="A=2-315"/>
</dbReference>
<dbReference type="PDBsum" id="3J5V"/>
<dbReference type="PDBsum" id="3R4V"/>
<dbReference type="PDBsum" id="3RB8"/>
<dbReference type="EMDB" id="EMD-5783"/>
<dbReference type="SMR" id="B3FK34"/>
<dbReference type="DIP" id="DIP-60806N"/>
<dbReference type="KEGG" id="vg:6372455"/>
<dbReference type="OrthoDB" id="31457at10239"/>
<dbReference type="EvolutionaryTrace" id="B3FK34"/>
<dbReference type="Proteomes" id="UP000002421">
    <property type="component" value="Genome"/>
</dbReference>
<dbReference type="GO" id="GO:0030430">
    <property type="term" value="C:host cell cytoplasm"/>
    <property type="evidence" value="ECO:0007669"/>
    <property type="project" value="UniProtKB-SubCell"/>
</dbReference>
<dbReference type="GO" id="GO:0005525">
    <property type="term" value="F:GTP binding"/>
    <property type="evidence" value="ECO:0007669"/>
    <property type="project" value="UniProtKB-KW"/>
</dbReference>
<dbReference type="GO" id="GO:0003924">
    <property type="term" value="F:GTPase activity"/>
    <property type="evidence" value="ECO:0007669"/>
    <property type="project" value="RHEA"/>
</dbReference>
<dbReference type="GO" id="GO:0042802">
    <property type="term" value="F:identical protein binding"/>
    <property type="evidence" value="ECO:0000353"/>
    <property type="project" value="IntAct"/>
</dbReference>
<dbReference type="GO" id="GO:0051234">
    <property type="term" value="P:establishment of localization"/>
    <property type="evidence" value="ECO:0000314"/>
    <property type="project" value="CACAO"/>
</dbReference>
<dbReference type="Gene3D" id="3.40.50.1440">
    <property type="entry name" value="Tubulin/FtsZ, GTPase domain"/>
    <property type="match status" value="1"/>
</dbReference>
<dbReference type="InterPro" id="IPR054768">
    <property type="entry name" value="PhuZ_C"/>
</dbReference>
<dbReference type="InterPro" id="IPR036525">
    <property type="entry name" value="Tubulin/FtsZ_GTPase_sf"/>
</dbReference>
<dbReference type="Pfam" id="PF22334">
    <property type="entry name" value="TubZ_C_2"/>
    <property type="match status" value="1"/>
</dbReference>
<dbReference type="SUPFAM" id="SSF52490">
    <property type="entry name" value="Tubulin nucleotide-binding domain-like"/>
    <property type="match status" value="1"/>
</dbReference>
<accession>B3FK34</accession>
<protein>
    <recommendedName>
        <fullName evidence="9">Phage tubulin-like protein</fullName>
        <shortName evidence="8">PhuZ</shortName>
        <ecNumber evidence="2">3.6.5.-</ecNumber>
    </recommendedName>
    <alternativeName>
        <fullName evidence="8">Phage tubulin/FtsZ</fullName>
    </alternativeName>
    <alternativeName>
        <fullName evidence="9">Tubulin-like protein TubZ</fullName>
    </alternativeName>
</protein>
<keyword id="KW-0002">3D-structure</keyword>
<keyword id="KW-0342">GTP-binding</keyword>
<keyword id="KW-1035">Host cytoplasm</keyword>
<keyword id="KW-0378">Hydrolase</keyword>
<keyword id="KW-0547">Nucleotide-binding</keyword>
<keyword id="KW-1185">Reference proteome</keyword>
<organism>
    <name type="scientific">Pseudomonas phage 201phi2-1</name>
    <name type="common">Pseudomonas chlororaphis phage 201phi2-1</name>
    <dbReference type="NCBI Taxonomy" id="198110"/>
    <lineage>
        <taxon>Viruses</taxon>
        <taxon>Duplodnaviria</taxon>
        <taxon>Heunggongvirae</taxon>
        <taxon>Uroviricota</taxon>
        <taxon>Caudoviricetes</taxon>
        <taxon>Serwervirus</taxon>
        <taxon>Serwervirus 201phi21</taxon>
    </lineage>
</organism>
<feature type="chain" id="PRO_0000445603" description="Phage tubulin-like protein">
    <location>
        <begin position="1"/>
        <end position="315"/>
    </location>
</feature>
<feature type="binding site" evidence="1">
    <location>
        <begin position="12"/>
        <end position="13"/>
    </location>
    <ligand>
        <name>GTP</name>
        <dbReference type="ChEBI" id="CHEBI:37565"/>
    </ligand>
</feature>
<feature type="binding site" evidence="1">
    <location>
        <begin position="93"/>
        <end position="95"/>
    </location>
    <ligand>
        <name>GTP</name>
        <dbReference type="ChEBI" id="CHEBI:37565"/>
    </ligand>
</feature>
<feature type="binding site" evidence="1">
    <location>
        <position position="165"/>
    </location>
    <ligand>
        <name>GTP</name>
        <dbReference type="ChEBI" id="CHEBI:37565"/>
    </ligand>
</feature>
<feature type="site" description="GTP hydrolysis" evidence="2">
    <location>
        <position position="187"/>
    </location>
</feature>
<feature type="site" description="GTP hydrolysis" evidence="2">
    <location>
        <position position="190"/>
    </location>
</feature>
<feature type="mutagenesis site" description="Impaired GTP hydrolysis and polymerization dynamics." evidence="2">
    <original>D</original>
    <variation>A</variation>
    <location>
        <position position="187"/>
    </location>
</feature>
<feature type="mutagenesis site" description="Impaired GTP hydrolysis and polymerization dynamics. Reduces critical concentration for polymerization, filaments no longer depolymerize. Encased viral DNA stays at cell poles. Empty phage capsids are immobile, probably on PhuZ filaments." evidence="2 4 5 7">
    <original>D</original>
    <variation>A</variation>
    <location>
        <position position="190"/>
    </location>
</feature>
<feature type="mutagenesis site" description="Complete loss of ability to form filaments." evidence="3">
    <original>R</original>
    <variation>A</variation>
    <variation>D</variation>
    <location>
        <position position="217"/>
    </location>
</feature>
<feature type="mutagenesis site" description="Blocks filament assembly." evidence="7">
    <original>D</original>
    <variation>A</variation>
    <location>
        <position position="235"/>
    </location>
</feature>
<feature type="mutagenesis site" description="No visible effect on filament formation, viral capsid movement capsid filling or phage DNA rotation." evidence="7">
    <original>D</original>
    <variation>A</variation>
    <location>
        <position position="259"/>
    </location>
</feature>
<feature type="mutagenesis site" description="No visible effect on filament formation, viral capsid movement capsid filling or phage DNA rotation." evidence="7">
    <original>D</original>
    <variation>A</variation>
    <location>
        <position position="263"/>
    </location>
</feature>
<feature type="mutagenesis site" description="60% loss of ability to form filaments." evidence="3">
    <original>D</original>
    <variation>A</variation>
    <location>
        <position position="303"/>
    </location>
</feature>
<feature type="mutagenesis site" description="Almost complete loss of ability to form filaments." evidence="3">
    <original>D</original>
    <variation>A</variation>
    <location>
        <position position="305"/>
    </location>
</feature>
<feature type="mutagenesis site" description="Complete loss of ability to form filaments." evidence="3">
    <original>D</original>
    <variation>R</variation>
    <location>
        <position position="305"/>
    </location>
</feature>
<feature type="strand" evidence="15">
    <location>
        <begin position="6"/>
        <end position="10"/>
    </location>
</feature>
<feature type="helix" evidence="15">
    <location>
        <begin position="11"/>
        <end position="18"/>
    </location>
</feature>
<feature type="helix" evidence="15">
    <location>
        <begin position="19"/>
        <end position="27"/>
    </location>
</feature>
<feature type="strand" evidence="15">
    <location>
        <begin position="28"/>
        <end position="35"/>
    </location>
</feature>
<feature type="helix" evidence="15">
    <location>
        <begin position="40"/>
        <end position="44"/>
    </location>
</feature>
<feature type="strand" evidence="15">
    <location>
        <begin position="45"/>
        <end position="49"/>
    </location>
</feature>
<feature type="turn" evidence="16">
    <location>
        <begin position="51"/>
        <end position="53"/>
    </location>
</feature>
<feature type="helix" evidence="15">
    <location>
        <begin position="60"/>
        <end position="67"/>
    </location>
</feature>
<feature type="helix" evidence="15">
    <location>
        <begin position="68"/>
        <end position="70"/>
    </location>
</feature>
<feature type="helix" evidence="15">
    <location>
        <begin position="71"/>
        <end position="76"/>
    </location>
</feature>
<feature type="strand" evidence="15">
    <location>
        <begin position="84"/>
        <end position="94"/>
    </location>
</feature>
<feature type="helix" evidence="15">
    <location>
        <begin position="95"/>
        <end position="108"/>
    </location>
</feature>
<feature type="strand" evidence="15">
    <location>
        <begin position="113"/>
        <end position="119"/>
    </location>
</feature>
<feature type="helix" evidence="15">
    <location>
        <begin position="124"/>
        <end position="144"/>
    </location>
</feature>
<feature type="strand" evidence="15">
    <location>
        <begin position="148"/>
        <end position="154"/>
    </location>
</feature>
<feature type="helix" evidence="15">
    <location>
        <begin position="161"/>
        <end position="178"/>
    </location>
</feature>
<feature type="strand" evidence="16">
    <location>
        <begin position="183"/>
        <end position="185"/>
    </location>
</feature>
<feature type="helix" evidence="15">
    <location>
        <begin position="188"/>
        <end position="195"/>
    </location>
</feature>
<feature type="helix" evidence="15">
    <location>
        <begin position="197"/>
        <end position="199"/>
    </location>
</feature>
<feature type="strand" evidence="15">
    <location>
        <begin position="208"/>
        <end position="216"/>
    </location>
</feature>
<feature type="helix" evidence="15">
    <location>
        <begin position="217"/>
        <end position="221"/>
    </location>
</feature>
<feature type="strand" evidence="15">
    <location>
        <begin position="228"/>
        <end position="235"/>
    </location>
</feature>
<feature type="helix" evidence="15">
    <location>
        <begin position="236"/>
        <end position="238"/>
    </location>
</feature>
<feature type="strand" evidence="15">
    <location>
        <begin position="246"/>
        <end position="252"/>
    </location>
</feature>
<feature type="strand" evidence="15">
    <location>
        <begin position="262"/>
        <end position="270"/>
    </location>
</feature>
<feature type="helix" evidence="15">
    <location>
        <begin position="274"/>
        <end position="294"/>
    </location>
</feature>
<organismHost>
    <name type="scientific">Pseudomonas chlororaphis</name>
    <dbReference type="NCBI Taxonomy" id="587753"/>
</organismHost>
<sequence length="315" mass="34621">MPVKVCLIFAGGTGMNVATKLVDLGEAVHCFDTCDKNVVDVHRSVNVTLTKGTRGAGGNRKVILPLVRPQIPALMDTIPEADFYIVCYSLGGGSGSVLGPLITGQLADRKASFVSFVVGAMESTDNLGNDIDTMKTLEAIAVNKHLPIVVNYVPNTQGRSYESINDEIAEKIRKVVLLVNQNHGRLDVHDVANWVRFTDKHNYLIPQVCELHIETTRKDAENVPEAISQLSLYLDPSKEVAFGTPIYRKVGIMKVDDLDVTDDQIHFVINSVGVVEIMKTITDSKLEMTRQQSKFTQRNPIIDADDNVDEDGMVV</sequence>
<gene>
    <name evidence="11" type="ORF">201phi2-1p059</name>
</gene>